<comment type="function">
    <text evidence="1">As part of AP-5, a probable fifth adaptor protein complex it may be involved in endosomal transport.</text>
</comment>
<comment type="subunit">
    <text evidence="1">Probably part of the adaptor protein complex 5 (AP-5) a tetramer composed of AP5B1, AP5M1, AP5S1 and AP5Z1. Interacts with ZFYVE26 and SPG11 (By similarity).</text>
</comment>
<comment type="subcellular location">
    <subcellularLocation>
        <location>Cytoplasm</location>
        <location>Cytosol</location>
    </subcellularLocation>
    <subcellularLocation>
        <location evidence="1">Late endosome membrane</location>
        <topology evidence="1">Peripheral membrane protein</topology>
        <orientation evidence="1">Cytoplasmic side</orientation>
    </subcellularLocation>
    <subcellularLocation>
        <location evidence="1">Lysosome membrane</location>
        <topology evidence="1">Peripheral membrane protein</topology>
        <orientation evidence="1">Cytoplasmic side</orientation>
    </subcellularLocation>
</comment>
<keyword id="KW-0963">Cytoplasm</keyword>
<keyword id="KW-0227">DNA damage</keyword>
<keyword id="KW-0234">DNA repair</keyword>
<keyword id="KW-0967">Endosome</keyword>
<keyword id="KW-0458">Lysosome</keyword>
<keyword id="KW-0472">Membrane</keyword>
<keyword id="KW-0653">Protein transport</keyword>
<keyword id="KW-1185">Reference proteome</keyword>
<keyword id="KW-0813">Transport</keyword>
<organism>
    <name type="scientific">Mus musculus</name>
    <name type="common">Mouse</name>
    <dbReference type="NCBI Taxonomy" id="10090"/>
    <lineage>
        <taxon>Eukaryota</taxon>
        <taxon>Metazoa</taxon>
        <taxon>Chordata</taxon>
        <taxon>Craniata</taxon>
        <taxon>Vertebrata</taxon>
        <taxon>Euteleostomi</taxon>
        <taxon>Mammalia</taxon>
        <taxon>Eutheria</taxon>
        <taxon>Euarchontoglires</taxon>
        <taxon>Glires</taxon>
        <taxon>Rodentia</taxon>
        <taxon>Myomorpha</taxon>
        <taxon>Muroidea</taxon>
        <taxon>Muridae</taxon>
        <taxon>Murinae</taxon>
        <taxon>Mus</taxon>
        <taxon>Mus</taxon>
    </lineage>
</organism>
<sequence length="170" mass="18806">MVHAFLIHTLRAPNLEDTGLCRVLYSCVFGAEKSPDDPRSHGAERDRLFRKEQILAVARQVESLCRLQQQAAGCSSTDLQPQFSAEPVSLHEAPHGAFHLAAGDPFQEPRTVLWLGILSLGFALVLDTHENLLLAERTLRLLARLLLDHLRLLTPAVSTGAAYCRAHPSR</sequence>
<protein>
    <recommendedName>
        <fullName>AP-5 complex subunit sigma-1</fullName>
    </recommendedName>
    <alternativeName>
        <fullName>Adaptor-related protein complex 5 sigma subunit</fullName>
        <shortName>Sigma5</shortName>
    </alternativeName>
</protein>
<gene>
    <name type="primary">Ap5s1</name>
</gene>
<dbReference type="EMBL" id="AK009634">
    <property type="protein sequence ID" value="BAB26405.1"/>
    <property type="molecule type" value="mRNA"/>
</dbReference>
<dbReference type="EMBL" id="AL808128">
    <property type="status" value="NOT_ANNOTATED_CDS"/>
    <property type="molecule type" value="Genomic_DNA"/>
</dbReference>
<dbReference type="CCDS" id="CCDS71147.1"/>
<dbReference type="RefSeq" id="NP_001277961.1">
    <property type="nucleotide sequence ID" value="NM_001291032.1"/>
</dbReference>
<dbReference type="RefSeq" id="NP_081405.2">
    <property type="nucleotide sequence ID" value="NM_027129.3"/>
</dbReference>
<dbReference type="ComplexPortal" id="CPX-5182">
    <property type="entry name" value="AP-5 Adaptor complex"/>
</dbReference>
<dbReference type="FunCoup" id="Q9D742">
    <property type="interactions" value="1611"/>
</dbReference>
<dbReference type="STRING" id="10090.ENSMUSP00000086933"/>
<dbReference type="iPTMnet" id="Q9D742"/>
<dbReference type="PhosphoSitePlus" id="Q9D742"/>
<dbReference type="PaxDb" id="10090-ENSMUSP00000086933"/>
<dbReference type="ProteomicsDB" id="296362"/>
<dbReference type="Pumba" id="Q9D742"/>
<dbReference type="Antibodypedia" id="64737">
    <property type="antibodies" value="12 antibodies from 8 providers"/>
</dbReference>
<dbReference type="DNASU" id="69596"/>
<dbReference type="Ensembl" id="ENSMUST00000110210.8">
    <property type="protein sequence ID" value="ENSMUSP00000105839.2"/>
    <property type="gene ID" value="ENSMUSG00000068264.12"/>
</dbReference>
<dbReference type="GeneID" id="69596"/>
<dbReference type="KEGG" id="mmu:69596"/>
<dbReference type="UCSC" id="uc056zpo.1">
    <property type="organism name" value="mouse"/>
</dbReference>
<dbReference type="AGR" id="MGI:1916846"/>
<dbReference type="CTD" id="55317"/>
<dbReference type="MGI" id="MGI:1916846">
    <property type="gene designation" value="Ap5s1"/>
</dbReference>
<dbReference type="VEuPathDB" id="HostDB:ENSMUSG00000068264"/>
<dbReference type="eggNOG" id="ENOG502RZ3F">
    <property type="taxonomic scope" value="Eukaryota"/>
</dbReference>
<dbReference type="GeneTree" id="ENSGT00390000013178"/>
<dbReference type="InParanoid" id="Q9D742"/>
<dbReference type="OrthoDB" id="370698at2759"/>
<dbReference type="BioGRID-ORCS" id="69596">
    <property type="hits" value="3 hits in 113 CRISPR screens"/>
</dbReference>
<dbReference type="ChiTaRS" id="Ap5s1">
    <property type="organism name" value="mouse"/>
</dbReference>
<dbReference type="PRO" id="PR:Q9D742"/>
<dbReference type="Proteomes" id="UP000000589">
    <property type="component" value="Chromosome 2"/>
</dbReference>
<dbReference type="RNAct" id="Q9D742">
    <property type="molecule type" value="protein"/>
</dbReference>
<dbReference type="Bgee" id="ENSMUSG00000068264">
    <property type="expression patterns" value="Expressed in hindlimb stylopod muscle and 217 other cell types or tissues"/>
</dbReference>
<dbReference type="ExpressionAtlas" id="Q9D742">
    <property type="expression patterns" value="baseline and differential"/>
</dbReference>
<dbReference type="GO" id="GO:0044599">
    <property type="term" value="C:AP-5 adaptor complex"/>
    <property type="evidence" value="ECO:0000303"/>
    <property type="project" value="ComplexPortal"/>
</dbReference>
<dbReference type="GO" id="GO:0030119">
    <property type="term" value="C:AP-type membrane coat adaptor complex"/>
    <property type="evidence" value="ECO:0000250"/>
    <property type="project" value="UniProtKB"/>
</dbReference>
<dbReference type="GO" id="GO:0005829">
    <property type="term" value="C:cytosol"/>
    <property type="evidence" value="ECO:0007669"/>
    <property type="project" value="UniProtKB-SubCell"/>
</dbReference>
<dbReference type="GO" id="GO:0005770">
    <property type="term" value="C:late endosome"/>
    <property type="evidence" value="ECO:0000250"/>
    <property type="project" value="UniProtKB"/>
</dbReference>
<dbReference type="GO" id="GO:0031902">
    <property type="term" value="C:late endosome membrane"/>
    <property type="evidence" value="ECO:0007669"/>
    <property type="project" value="UniProtKB-SubCell"/>
</dbReference>
<dbReference type="GO" id="GO:0005765">
    <property type="term" value="C:lysosomal membrane"/>
    <property type="evidence" value="ECO:0007669"/>
    <property type="project" value="UniProtKB-SubCell"/>
</dbReference>
<dbReference type="GO" id="GO:0005764">
    <property type="term" value="C:lysosome"/>
    <property type="evidence" value="ECO:0000250"/>
    <property type="project" value="UniProtKB"/>
</dbReference>
<dbReference type="GO" id="GO:0000724">
    <property type="term" value="P:double-strand break repair via homologous recombination"/>
    <property type="evidence" value="ECO:0000250"/>
    <property type="project" value="UniProtKB"/>
</dbReference>
<dbReference type="GO" id="GO:0016197">
    <property type="term" value="P:endosomal transport"/>
    <property type="evidence" value="ECO:0000250"/>
    <property type="project" value="UniProtKB"/>
</dbReference>
<dbReference type="GO" id="GO:0015031">
    <property type="term" value="P:protein transport"/>
    <property type="evidence" value="ECO:0007669"/>
    <property type="project" value="UniProtKB-KW"/>
</dbReference>
<dbReference type="GO" id="GO:0016192">
    <property type="term" value="P:vesicle-mediated transport"/>
    <property type="evidence" value="ECO:0000303"/>
    <property type="project" value="ComplexPortal"/>
</dbReference>
<dbReference type="InterPro" id="IPR029392">
    <property type="entry name" value="AP-5_subunit_s1"/>
</dbReference>
<dbReference type="PANTHER" id="PTHR16120">
    <property type="entry name" value="AP-5 COMPLEX SUBUNIT SIGMA-1"/>
    <property type="match status" value="1"/>
</dbReference>
<dbReference type="PANTHER" id="PTHR16120:SF0">
    <property type="entry name" value="AP-5 COMPLEX SUBUNIT SIGMA-1"/>
    <property type="match status" value="1"/>
</dbReference>
<dbReference type="Pfam" id="PF15001">
    <property type="entry name" value="AP-5_subunit_s1"/>
    <property type="match status" value="1"/>
</dbReference>
<name>AP5S1_MOUSE</name>
<evidence type="ECO:0000250" key="1"/>
<feature type="chain" id="PRO_0000079424" description="AP-5 complex subunit sigma-1">
    <location>
        <begin position="1"/>
        <end position="170"/>
    </location>
</feature>
<reference key="1">
    <citation type="journal article" date="2005" name="Science">
        <title>The transcriptional landscape of the mammalian genome.</title>
        <authorList>
            <person name="Carninci P."/>
            <person name="Kasukawa T."/>
            <person name="Katayama S."/>
            <person name="Gough J."/>
            <person name="Frith M.C."/>
            <person name="Maeda N."/>
            <person name="Oyama R."/>
            <person name="Ravasi T."/>
            <person name="Lenhard B."/>
            <person name="Wells C."/>
            <person name="Kodzius R."/>
            <person name="Shimokawa K."/>
            <person name="Bajic V.B."/>
            <person name="Brenner S.E."/>
            <person name="Batalov S."/>
            <person name="Forrest A.R."/>
            <person name="Zavolan M."/>
            <person name="Davis M.J."/>
            <person name="Wilming L.G."/>
            <person name="Aidinis V."/>
            <person name="Allen J.E."/>
            <person name="Ambesi-Impiombato A."/>
            <person name="Apweiler R."/>
            <person name="Aturaliya R.N."/>
            <person name="Bailey T.L."/>
            <person name="Bansal M."/>
            <person name="Baxter L."/>
            <person name="Beisel K.W."/>
            <person name="Bersano T."/>
            <person name="Bono H."/>
            <person name="Chalk A.M."/>
            <person name="Chiu K.P."/>
            <person name="Choudhary V."/>
            <person name="Christoffels A."/>
            <person name="Clutterbuck D.R."/>
            <person name="Crowe M.L."/>
            <person name="Dalla E."/>
            <person name="Dalrymple B.P."/>
            <person name="de Bono B."/>
            <person name="Della Gatta G."/>
            <person name="di Bernardo D."/>
            <person name="Down T."/>
            <person name="Engstrom P."/>
            <person name="Fagiolini M."/>
            <person name="Faulkner G."/>
            <person name="Fletcher C.F."/>
            <person name="Fukushima T."/>
            <person name="Furuno M."/>
            <person name="Futaki S."/>
            <person name="Gariboldi M."/>
            <person name="Georgii-Hemming P."/>
            <person name="Gingeras T.R."/>
            <person name="Gojobori T."/>
            <person name="Green R.E."/>
            <person name="Gustincich S."/>
            <person name="Harbers M."/>
            <person name="Hayashi Y."/>
            <person name="Hensch T.K."/>
            <person name="Hirokawa N."/>
            <person name="Hill D."/>
            <person name="Huminiecki L."/>
            <person name="Iacono M."/>
            <person name="Ikeo K."/>
            <person name="Iwama A."/>
            <person name="Ishikawa T."/>
            <person name="Jakt M."/>
            <person name="Kanapin A."/>
            <person name="Katoh M."/>
            <person name="Kawasawa Y."/>
            <person name="Kelso J."/>
            <person name="Kitamura H."/>
            <person name="Kitano H."/>
            <person name="Kollias G."/>
            <person name="Krishnan S.P."/>
            <person name="Kruger A."/>
            <person name="Kummerfeld S.K."/>
            <person name="Kurochkin I.V."/>
            <person name="Lareau L.F."/>
            <person name="Lazarevic D."/>
            <person name="Lipovich L."/>
            <person name="Liu J."/>
            <person name="Liuni S."/>
            <person name="McWilliam S."/>
            <person name="Madan Babu M."/>
            <person name="Madera M."/>
            <person name="Marchionni L."/>
            <person name="Matsuda H."/>
            <person name="Matsuzawa S."/>
            <person name="Miki H."/>
            <person name="Mignone F."/>
            <person name="Miyake S."/>
            <person name="Morris K."/>
            <person name="Mottagui-Tabar S."/>
            <person name="Mulder N."/>
            <person name="Nakano N."/>
            <person name="Nakauchi H."/>
            <person name="Ng P."/>
            <person name="Nilsson R."/>
            <person name="Nishiguchi S."/>
            <person name="Nishikawa S."/>
            <person name="Nori F."/>
            <person name="Ohara O."/>
            <person name="Okazaki Y."/>
            <person name="Orlando V."/>
            <person name="Pang K.C."/>
            <person name="Pavan W.J."/>
            <person name="Pavesi G."/>
            <person name="Pesole G."/>
            <person name="Petrovsky N."/>
            <person name="Piazza S."/>
            <person name="Reed J."/>
            <person name="Reid J.F."/>
            <person name="Ring B.Z."/>
            <person name="Ringwald M."/>
            <person name="Rost B."/>
            <person name="Ruan Y."/>
            <person name="Salzberg S.L."/>
            <person name="Sandelin A."/>
            <person name="Schneider C."/>
            <person name="Schoenbach C."/>
            <person name="Sekiguchi K."/>
            <person name="Semple C.A."/>
            <person name="Seno S."/>
            <person name="Sessa L."/>
            <person name="Sheng Y."/>
            <person name="Shibata Y."/>
            <person name="Shimada H."/>
            <person name="Shimada K."/>
            <person name="Silva D."/>
            <person name="Sinclair B."/>
            <person name="Sperling S."/>
            <person name="Stupka E."/>
            <person name="Sugiura K."/>
            <person name="Sultana R."/>
            <person name="Takenaka Y."/>
            <person name="Taki K."/>
            <person name="Tammoja K."/>
            <person name="Tan S.L."/>
            <person name="Tang S."/>
            <person name="Taylor M.S."/>
            <person name="Tegner J."/>
            <person name="Teichmann S.A."/>
            <person name="Ueda H.R."/>
            <person name="van Nimwegen E."/>
            <person name="Verardo R."/>
            <person name="Wei C.L."/>
            <person name="Yagi K."/>
            <person name="Yamanishi H."/>
            <person name="Zabarovsky E."/>
            <person name="Zhu S."/>
            <person name="Zimmer A."/>
            <person name="Hide W."/>
            <person name="Bult C."/>
            <person name="Grimmond S.M."/>
            <person name="Teasdale R.D."/>
            <person name="Liu E.T."/>
            <person name="Brusic V."/>
            <person name="Quackenbush J."/>
            <person name="Wahlestedt C."/>
            <person name="Mattick J.S."/>
            <person name="Hume D.A."/>
            <person name="Kai C."/>
            <person name="Sasaki D."/>
            <person name="Tomaru Y."/>
            <person name="Fukuda S."/>
            <person name="Kanamori-Katayama M."/>
            <person name="Suzuki M."/>
            <person name="Aoki J."/>
            <person name="Arakawa T."/>
            <person name="Iida J."/>
            <person name="Imamura K."/>
            <person name="Itoh M."/>
            <person name="Kato T."/>
            <person name="Kawaji H."/>
            <person name="Kawagashira N."/>
            <person name="Kawashima T."/>
            <person name="Kojima M."/>
            <person name="Kondo S."/>
            <person name="Konno H."/>
            <person name="Nakano K."/>
            <person name="Ninomiya N."/>
            <person name="Nishio T."/>
            <person name="Okada M."/>
            <person name="Plessy C."/>
            <person name="Shibata K."/>
            <person name="Shiraki T."/>
            <person name="Suzuki S."/>
            <person name="Tagami M."/>
            <person name="Waki K."/>
            <person name="Watahiki A."/>
            <person name="Okamura-Oho Y."/>
            <person name="Suzuki H."/>
            <person name="Kawai J."/>
            <person name="Hayashizaki Y."/>
        </authorList>
    </citation>
    <scope>NUCLEOTIDE SEQUENCE [LARGE SCALE MRNA]</scope>
    <source>
        <strain>C57BL/6J</strain>
        <tissue>Tongue</tissue>
    </source>
</reference>
<reference key="2">
    <citation type="journal article" date="2009" name="PLoS Biol.">
        <title>Lineage-specific biology revealed by a finished genome assembly of the mouse.</title>
        <authorList>
            <person name="Church D.M."/>
            <person name="Goodstadt L."/>
            <person name="Hillier L.W."/>
            <person name="Zody M.C."/>
            <person name="Goldstein S."/>
            <person name="She X."/>
            <person name="Bult C.J."/>
            <person name="Agarwala R."/>
            <person name="Cherry J.L."/>
            <person name="DiCuccio M."/>
            <person name="Hlavina W."/>
            <person name="Kapustin Y."/>
            <person name="Meric P."/>
            <person name="Maglott D."/>
            <person name="Birtle Z."/>
            <person name="Marques A.C."/>
            <person name="Graves T."/>
            <person name="Zhou S."/>
            <person name="Teague B."/>
            <person name="Potamousis K."/>
            <person name="Churas C."/>
            <person name="Place M."/>
            <person name="Herschleb J."/>
            <person name="Runnheim R."/>
            <person name="Forrest D."/>
            <person name="Amos-Landgraf J."/>
            <person name="Schwartz D.C."/>
            <person name="Cheng Z."/>
            <person name="Lindblad-Toh K."/>
            <person name="Eichler E.E."/>
            <person name="Ponting C.P."/>
        </authorList>
    </citation>
    <scope>NUCLEOTIDE SEQUENCE [LARGE SCALE GENOMIC DNA]</scope>
    <source>
        <strain>C57BL/6J</strain>
    </source>
</reference>
<reference key="3">
    <citation type="journal article" date="2010" name="Cell">
        <title>A tissue-specific atlas of mouse protein phosphorylation and expression.</title>
        <authorList>
            <person name="Huttlin E.L."/>
            <person name="Jedrychowski M.P."/>
            <person name="Elias J.E."/>
            <person name="Goswami T."/>
            <person name="Rad R."/>
            <person name="Beausoleil S.A."/>
            <person name="Villen J."/>
            <person name="Haas W."/>
            <person name="Sowa M.E."/>
            <person name="Gygi S.P."/>
        </authorList>
    </citation>
    <scope>IDENTIFICATION BY MASS SPECTROMETRY [LARGE SCALE ANALYSIS]</scope>
    <source>
        <tissue>Spleen</tissue>
    </source>
</reference>
<proteinExistence type="evidence at protein level"/>
<accession>Q9D742</accession>
<accession>A2ANC8</accession>